<dbReference type="SMR" id="P0DN50"/>
<dbReference type="GO" id="GO:0005576">
    <property type="term" value="C:extracellular region"/>
    <property type="evidence" value="ECO:0007669"/>
    <property type="project" value="UniProtKB-SubCell"/>
</dbReference>
<dbReference type="GO" id="GO:0090729">
    <property type="term" value="F:toxin activity"/>
    <property type="evidence" value="ECO:0007669"/>
    <property type="project" value="UniProtKB-KW"/>
</dbReference>
<keyword id="KW-0165">Cleavage on pair of basic residues</keyword>
<keyword id="KW-1015">Disulfide bond</keyword>
<keyword id="KW-0964">Secreted</keyword>
<keyword id="KW-0732">Signal</keyword>
<keyword id="KW-0800">Toxin</keyword>
<comment type="subcellular location">
    <subcellularLocation>
        <location evidence="4">Secreted</location>
    </subcellularLocation>
</comment>
<comment type="tissue specificity">
    <text evidence="4">Expressed by the venom duct.</text>
</comment>
<comment type="domain">
    <text>The cysteine framework is VI/VII (C-C-CC-C-C).</text>
</comment>
<comment type="PTM">
    <text evidence="3">Contains 3 disulfide bonds.</text>
</comment>
<comment type="similarity">
    <text>Belongs to the teretoxin M (TM) superfamily.</text>
</comment>
<name>T6G_TERSU</name>
<evidence type="ECO:0000255" key="1"/>
<evidence type="ECO:0000303" key="2">
    <source>
    </source>
</evidence>
<evidence type="ECO:0000305" key="3"/>
<evidence type="ECO:0000305" key="4">
    <source>
    </source>
</evidence>
<organism>
    <name type="scientific">Terebra subulata</name>
    <name type="common">Chocolate spotted auger</name>
    <name type="synonym">Buccinum subulatum</name>
    <dbReference type="NCBI Taxonomy" id="89435"/>
    <lineage>
        <taxon>Eukaryota</taxon>
        <taxon>Metazoa</taxon>
        <taxon>Spiralia</taxon>
        <taxon>Lophotrochozoa</taxon>
        <taxon>Mollusca</taxon>
        <taxon>Gastropoda</taxon>
        <taxon>Caenogastropoda</taxon>
        <taxon>Neogastropoda</taxon>
        <taxon>Conoidea</taxon>
        <taxon>Terebridae</taxon>
        <taxon>Terebra</taxon>
    </lineage>
</organism>
<proteinExistence type="inferred from homology"/>
<reference key="1">
    <citation type="journal article" date="2015" name="Genome Biol. Evol.">
        <title>Molecular diversity and gene evolution of the venom arsenal of Terebridae predatory marine snails.</title>
        <authorList>
            <person name="Gorson J."/>
            <person name="Ramrattan G."/>
            <person name="Verdes A."/>
            <person name="Wright E.M."/>
            <person name="Kantor Y."/>
            <person name="Rajaram Srinivasan R."/>
            <person name="Musunuri R."/>
            <person name="Packer D."/>
            <person name="Albano G."/>
            <person name="Qiu W.G."/>
            <person name="Holford M."/>
        </authorList>
    </citation>
    <scope>NUCLEOTIDE SEQUENCE [MRNA]</scope>
    <source>
        <tissue>Venom duct</tissue>
    </source>
</reference>
<sequence length="86" mass="9834">MATSGRLLCVCLVMGLVFESLGYLTGREKRPAENLEASVQRRWYLNRRYEVDCGGVLCQFGCCEDDRCRELGCEFMDVLSRIRSAE</sequence>
<accession>P0DN50</accession>
<feature type="signal peptide" evidence="1">
    <location>
        <begin position="1"/>
        <end position="21"/>
    </location>
</feature>
<feature type="propeptide" id="PRO_0000435066" evidence="3">
    <location>
        <begin position="22"/>
        <end position="46"/>
    </location>
</feature>
<feature type="chain" id="PRO_0000435067" description="Teretoxin Tsu6.16">
    <location>
        <begin position="49"/>
        <end position="86"/>
    </location>
</feature>
<protein>
    <recommendedName>
        <fullName evidence="2">Teretoxin Tsu6.16</fullName>
    </recommendedName>
</protein>